<sequence>MRWLFWSSGSQQAPNNKDNNNSNNNDDDDDDYDNNINKRPPLTPESPSPSHPPCASCSTQATASFSNPRRDWNTSLTAHDWAGEFKDPRNLIPTLLLTGGILFCVRIHRQYLRRIPLATNISPTYFHKRSLFGRVTSVGDGDNFRMYHTPGGRLAGWEWLPFRRVPRVKKELKDRTIHIRLAGIDAPELPHFGRPAQPYSHAAHTWLTNYLLNKRVRVFPYRQDQYGRVVATVYVRRFPWIFLRRDVGLQMLRAGMATVYEAKSGVEFGGEGKESKYRRAEEVAKRRGRGLWKGWKGVGWESPREYKNRMAGVEGEKAAAAAAAAAAAAAAAAGVGGMGELGVNGEKN</sequence>
<gene>
    <name type="primary">LCL3</name>
    <name type="ORF">PAAG_05585</name>
</gene>
<protein>
    <recommendedName>
        <fullName>Probable endonuclease LCL3</fullName>
        <ecNumber>3.1.-.-</ecNumber>
    </recommendedName>
</protein>
<accession>C1H492</accession>
<name>LCL3_PARBA</name>
<reference key="1">
    <citation type="journal article" date="2011" name="PLoS Genet.">
        <title>Comparative genomic analysis of human fungal pathogens causing paracoccidioidomycosis.</title>
        <authorList>
            <person name="Desjardins C.A."/>
            <person name="Champion M.D."/>
            <person name="Holder J.W."/>
            <person name="Muszewska A."/>
            <person name="Goldberg J."/>
            <person name="Bailao A.M."/>
            <person name="Brigido M.M."/>
            <person name="Ferreira M.E."/>
            <person name="Garcia A.M."/>
            <person name="Grynberg M."/>
            <person name="Gujja S."/>
            <person name="Heiman D.I."/>
            <person name="Henn M.R."/>
            <person name="Kodira C.D."/>
            <person name="Leon-Narvaez H."/>
            <person name="Longo L.V.G."/>
            <person name="Ma L.-J."/>
            <person name="Malavazi I."/>
            <person name="Matsuo A.L."/>
            <person name="Morais F.V."/>
            <person name="Pereira M."/>
            <person name="Rodriguez-Brito S."/>
            <person name="Sakthikumar S."/>
            <person name="Salem-Izacc S.M."/>
            <person name="Sykes S.M."/>
            <person name="Teixeira M.M."/>
            <person name="Vallejo M.C."/>
            <person name="Walter M.E."/>
            <person name="Yandava C."/>
            <person name="Young S."/>
            <person name="Zeng Q."/>
            <person name="Zucker J."/>
            <person name="Felipe M.S."/>
            <person name="Goldman G.H."/>
            <person name="Haas B.J."/>
            <person name="McEwen J.G."/>
            <person name="Nino-Vega G."/>
            <person name="Puccia R."/>
            <person name="San-Blas G."/>
            <person name="Soares C.M."/>
            <person name="Birren B.W."/>
            <person name="Cuomo C.A."/>
        </authorList>
    </citation>
    <scope>NUCLEOTIDE SEQUENCE [LARGE SCALE GENOMIC DNA]</scope>
    <source>
        <strain>ATCC MYA-826 / Pb01</strain>
    </source>
</reference>
<organism>
    <name type="scientific">Paracoccidioides lutzii (strain ATCC MYA-826 / Pb01)</name>
    <name type="common">Paracoccidioides brasiliensis</name>
    <dbReference type="NCBI Taxonomy" id="502779"/>
    <lineage>
        <taxon>Eukaryota</taxon>
        <taxon>Fungi</taxon>
        <taxon>Dikarya</taxon>
        <taxon>Ascomycota</taxon>
        <taxon>Pezizomycotina</taxon>
        <taxon>Eurotiomycetes</taxon>
        <taxon>Eurotiomycetidae</taxon>
        <taxon>Onygenales</taxon>
        <taxon>Ajellomycetaceae</taxon>
        <taxon>Paracoccidioides</taxon>
    </lineage>
</organism>
<evidence type="ECO:0000250" key="1"/>
<evidence type="ECO:0000255" key="2"/>
<evidence type="ECO:0000255" key="3">
    <source>
        <dbReference type="PROSITE-ProRule" id="PRU00272"/>
    </source>
</evidence>
<evidence type="ECO:0000256" key="4">
    <source>
        <dbReference type="SAM" id="MobiDB-lite"/>
    </source>
</evidence>
<evidence type="ECO:0000305" key="5"/>
<feature type="chain" id="PRO_0000408670" description="Probable endonuclease LCL3">
    <location>
        <begin position="1"/>
        <end position="348"/>
    </location>
</feature>
<feature type="transmembrane region" description="Helical" evidence="2">
    <location>
        <begin position="91"/>
        <end position="107"/>
    </location>
</feature>
<feature type="domain" description="TNase-like" evidence="3">
    <location>
        <begin position="129"/>
        <end position="294"/>
    </location>
</feature>
<feature type="region of interest" description="Disordered" evidence="4">
    <location>
        <begin position="1"/>
        <end position="70"/>
    </location>
</feature>
<feature type="compositionally biased region" description="Low complexity" evidence="4">
    <location>
        <begin position="15"/>
        <end position="24"/>
    </location>
</feature>
<feature type="compositionally biased region" description="Pro residues" evidence="4">
    <location>
        <begin position="41"/>
        <end position="52"/>
    </location>
</feature>
<feature type="compositionally biased region" description="Polar residues" evidence="4">
    <location>
        <begin position="59"/>
        <end position="70"/>
    </location>
</feature>
<feature type="active site" evidence="3">
    <location>
        <position position="180"/>
    </location>
</feature>
<feature type="active site" evidence="3">
    <location>
        <position position="188"/>
    </location>
</feature>
<feature type="active site" evidence="3">
    <location>
        <position position="228"/>
    </location>
</feature>
<feature type="binding site" evidence="3">
    <location>
        <position position="185"/>
    </location>
    <ligand>
        <name>Ca(2+)</name>
        <dbReference type="ChEBI" id="CHEBI:29108"/>
    </ligand>
</feature>
<dbReference type="EC" id="3.1.-.-"/>
<dbReference type="EMBL" id="KN294006">
    <property type="protein sequence ID" value="EEH34536.1"/>
    <property type="molecule type" value="Genomic_DNA"/>
</dbReference>
<dbReference type="RefSeq" id="XP_002792300.1">
    <property type="nucleotide sequence ID" value="XM_002792254.1"/>
</dbReference>
<dbReference type="SMR" id="C1H492"/>
<dbReference type="STRING" id="502779.C1H492"/>
<dbReference type="GeneID" id="9095599"/>
<dbReference type="KEGG" id="pbl:PAAG_05585"/>
<dbReference type="VEuPathDB" id="FungiDB:PAAG_05585"/>
<dbReference type="eggNOG" id="ENOG502S1U4">
    <property type="taxonomic scope" value="Eukaryota"/>
</dbReference>
<dbReference type="HOGENOM" id="CLU_046484_0_1_1"/>
<dbReference type="OMA" id="IYHTPGG"/>
<dbReference type="OrthoDB" id="430293at2759"/>
<dbReference type="Proteomes" id="UP000002059">
    <property type="component" value="Partially assembled WGS sequence"/>
</dbReference>
<dbReference type="GO" id="GO:0016020">
    <property type="term" value="C:membrane"/>
    <property type="evidence" value="ECO:0007669"/>
    <property type="project" value="UniProtKB-SubCell"/>
</dbReference>
<dbReference type="GO" id="GO:0005739">
    <property type="term" value="C:mitochondrion"/>
    <property type="evidence" value="ECO:0007669"/>
    <property type="project" value="UniProtKB-SubCell"/>
</dbReference>
<dbReference type="GO" id="GO:0004519">
    <property type="term" value="F:endonuclease activity"/>
    <property type="evidence" value="ECO:0007669"/>
    <property type="project" value="UniProtKB-KW"/>
</dbReference>
<dbReference type="GO" id="GO:0046872">
    <property type="term" value="F:metal ion binding"/>
    <property type="evidence" value="ECO:0007669"/>
    <property type="project" value="UniProtKB-KW"/>
</dbReference>
<dbReference type="FunFam" id="2.40.50.90:FF:000029">
    <property type="entry name" value="Probable endonuclease lcl3"/>
    <property type="match status" value="1"/>
</dbReference>
<dbReference type="Gene3D" id="2.40.50.90">
    <property type="match status" value="1"/>
</dbReference>
<dbReference type="InterPro" id="IPR035437">
    <property type="entry name" value="SNase_OB-fold_sf"/>
</dbReference>
<dbReference type="InterPro" id="IPR016071">
    <property type="entry name" value="Staphylococal_nuclease_OB-fold"/>
</dbReference>
<dbReference type="PANTHER" id="PTHR12302">
    <property type="entry name" value="EBNA2 BINDING PROTEIN P100"/>
    <property type="match status" value="1"/>
</dbReference>
<dbReference type="PANTHER" id="PTHR12302:SF3">
    <property type="entry name" value="SERINE_THREONINE-PROTEIN KINASE 31"/>
    <property type="match status" value="1"/>
</dbReference>
<dbReference type="Pfam" id="PF00565">
    <property type="entry name" value="SNase"/>
    <property type="match status" value="1"/>
</dbReference>
<dbReference type="SMART" id="SM00318">
    <property type="entry name" value="SNc"/>
    <property type="match status" value="1"/>
</dbReference>
<dbReference type="SUPFAM" id="SSF50199">
    <property type="entry name" value="Staphylococcal nuclease"/>
    <property type="match status" value="1"/>
</dbReference>
<dbReference type="PROSITE" id="PS50830">
    <property type="entry name" value="TNASE_3"/>
    <property type="match status" value="1"/>
</dbReference>
<proteinExistence type="inferred from homology"/>
<keyword id="KW-0106">Calcium</keyword>
<keyword id="KW-0255">Endonuclease</keyword>
<keyword id="KW-0378">Hydrolase</keyword>
<keyword id="KW-0472">Membrane</keyword>
<keyword id="KW-0479">Metal-binding</keyword>
<keyword id="KW-0496">Mitochondrion</keyword>
<keyword id="KW-0540">Nuclease</keyword>
<keyword id="KW-1185">Reference proteome</keyword>
<keyword id="KW-0812">Transmembrane</keyword>
<keyword id="KW-1133">Transmembrane helix</keyword>
<comment type="subcellular location">
    <subcellularLocation>
        <location>Mitochondrion</location>
    </subcellularLocation>
    <subcellularLocation>
        <location evidence="1">Membrane</location>
        <topology evidence="1">Single-pass membrane protein</topology>
    </subcellularLocation>
</comment>
<comment type="similarity">
    <text evidence="5">Belongs to the LCL3 family.</text>
</comment>